<organism>
    <name type="scientific">Acidothermus cellulolyticus (strain ATCC 43068 / DSM 8971 / 11B)</name>
    <dbReference type="NCBI Taxonomy" id="351607"/>
    <lineage>
        <taxon>Bacteria</taxon>
        <taxon>Bacillati</taxon>
        <taxon>Actinomycetota</taxon>
        <taxon>Actinomycetes</taxon>
        <taxon>Acidothermales</taxon>
        <taxon>Acidothermaceae</taxon>
        <taxon>Acidothermus</taxon>
    </lineage>
</organism>
<dbReference type="EC" id="5.3.1.16" evidence="1"/>
<dbReference type="EMBL" id="CP000481">
    <property type="protein sequence ID" value="ABK52835.1"/>
    <property type="molecule type" value="Genomic_DNA"/>
</dbReference>
<dbReference type="SMR" id="A0LTS5"/>
<dbReference type="FunCoup" id="A0LTS5">
    <property type="interactions" value="98"/>
</dbReference>
<dbReference type="STRING" id="351607.Acel_1062"/>
<dbReference type="KEGG" id="ace:Acel_1062"/>
<dbReference type="eggNOG" id="COG0106">
    <property type="taxonomic scope" value="Bacteria"/>
</dbReference>
<dbReference type="HOGENOM" id="CLU_048577_1_1_11"/>
<dbReference type="InParanoid" id="A0LTS5"/>
<dbReference type="OrthoDB" id="9807749at2"/>
<dbReference type="UniPathway" id="UPA00031">
    <property type="reaction ID" value="UER00009"/>
</dbReference>
<dbReference type="Proteomes" id="UP000008221">
    <property type="component" value="Chromosome"/>
</dbReference>
<dbReference type="GO" id="GO:0005737">
    <property type="term" value="C:cytoplasm"/>
    <property type="evidence" value="ECO:0007669"/>
    <property type="project" value="UniProtKB-SubCell"/>
</dbReference>
<dbReference type="GO" id="GO:0003949">
    <property type="term" value="F:1-(5-phosphoribosyl)-5-[(5-phosphoribosylamino)methylideneamino]imidazole-4-carboxamide isomerase activity"/>
    <property type="evidence" value="ECO:0007669"/>
    <property type="project" value="UniProtKB-UniRule"/>
</dbReference>
<dbReference type="GO" id="GO:0004640">
    <property type="term" value="F:phosphoribosylanthranilate isomerase activity"/>
    <property type="evidence" value="ECO:0007669"/>
    <property type="project" value="InterPro"/>
</dbReference>
<dbReference type="GO" id="GO:0000105">
    <property type="term" value="P:L-histidine biosynthetic process"/>
    <property type="evidence" value="ECO:0007669"/>
    <property type="project" value="UniProtKB-UniRule"/>
</dbReference>
<dbReference type="GO" id="GO:0000162">
    <property type="term" value="P:L-tryptophan biosynthetic process"/>
    <property type="evidence" value="ECO:0007669"/>
    <property type="project" value="InterPro"/>
</dbReference>
<dbReference type="CDD" id="cd04732">
    <property type="entry name" value="HisA"/>
    <property type="match status" value="1"/>
</dbReference>
<dbReference type="FunFam" id="3.20.20.70:FF:000009">
    <property type="entry name" value="1-(5-phosphoribosyl)-5-[(5-phosphoribosylamino)methylideneamino] imidazole-4-carboxamide isomerase"/>
    <property type="match status" value="1"/>
</dbReference>
<dbReference type="Gene3D" id="3.20.20.70">
    <property type="entry name" value="Aldolase class I"/>
    <property type="match status" value="1"/>
</dbReference>
<dbReference type="HAMAP" id="MF_01014">
    <property type="entry name" value="HisA"/>
    <property type="match status" value="1"/>
</dbReference>
<dbReference type="InterPro" id="IPR013785">
    <property type="entry name" value="Aldolase_TIM"/>
</dbReference>
<dbReference type="InterPro" id="IPR006062">
    <property type="entry name" value="His_biosynth"/>
</dbReference>
<dbReference type="InterPro" id="IPR010188">
    <property type="entry name" value="HisA/PriA_Actinobacteria"/>
</dbReference>
<dbReference type="InterPro" id="IPR044524">
    <property type="entry name" value="Isoase_HisA-like"/>
</dbReference>
<dbReference type="InterPro" id="IPR023016">
    <property type="entry name" value="Isoase_HisA-like_bact"/>
</dbReference>
<dbReference type="InterPro" id="IPR011060">
    <property type="entry name" value="RibuloseP-bd_barrel"/>
</dbReference>
<dbReference type="NCBIfam" id="TIGR01919">
    <property type="entry name" value="hisA-trpF"/>
    <property type="match status" value="1"/>
</dbReference>
<dbReference type="PANTHER" id="PTHR43090">
    <property type="entry name" value="1-(5-PHOSPHORIBOSYL)-5-[(5-PHOSPHORIBOSYLAMINO)METHYLIDENEAMINO] IMIDAZOLE-4-CARBOXAMIDE ISOMERASE"/>
    <property type="match status" value="1"/>
</dbReference>
<dbReference type="PANTHER" id="PTHR43090:SF2">
    <property type="entry name" value="1-(5-PHOSPHORIBOSYL)-5-[(5-PHOSPHORIBOSYLAMINO)METHYLIDENEAMINO] IMIDAZOLE-4-CARBOXAMIDE ISOMERASE"/>
    <property type="match status" value="1"/>
</dbReference>
<dbReference type="Pfam" id="PF00977">
    <property type="entry name" value="His_biosynth"/>
    <property type="match status" value="1"/>
</dbReference>
<dbReference type="SUPFAM" id="SSF51366">
    <property type="entry name" value="Ribulose-phoshate binding barrel"/>
    <property type="match status" value="1"/>
</dbReference>
<sequence length="241" mass="25000">MTGLEILPAVDVAGGQAVRLVQGAAGTETRYGSPLEAALAWQAAGARWIHLVDLDAAFGRGSNRELLAEIVARVDVAVELSGGIRDDESLRVALATGCARVNIGTAALENPEWVRRVVAEYGEKIAVGLDVRDGRLAARGWTKDGGELFEVLARLDADGCARYVVTDVARDGTLGGPNIELLRAVCAATDRPVVASGGISSLDDVRAVAALVPLGVEGLIIGKALYAGVFSLREAMTAAQA</sequence>
<proteinExistence type="inferred from homology"/>
<comment type="catalytic activity">
    <reaction evidence="1">
        <text>1-(5-phospho-beta-D-ribosyl)-5-[(5-phospho-beta-D-ribosylamino)methylideneamino]imidazole-4-carboxamide = 5-[(5-phospho-1-deoxy-D-ribulos-1-ylimino)methylamino]-1-(5-phospho-beta-D-ribosyl)imidazole-4-carboxamide</text>
        <dbReference type="Rhea" id="RHEA:15469"/>
        <dbReference type="ChEBI" id="CHEBI:58435"/>
        <dbReference type="ChEBI" id="CHEBI:58525"/>
        <dbReference type="EC" id="5.3.1.16"/>
    </reaction>
</comment>
<comment type="pathway">
    <text evidence="1">Amino-acid biosynthesis; L-histidine biosynthesis; L-histidine from 5-phospho-alpha-D-ribose 1-diphosphate: step 4/9.</text>
</comment>
<comment type="subcellular location">
    <subcellularLocation>
        <location evidence="1">Cytoplasm</location>
    </subcellularLocation>
</comment>
<comment type="similarity">
    <text evidence="1">Belongs to the HisA/HisF family.</text>
</comment>
<feature type="chain" id="PRO_0000290440" description="1-(5-phosphoribosyl)-5-[(5-phosphoribosylamino)methylideneamino] imidazole-4-carboxamide isomerase">
    <location>
        <begin position="1"/>
        <end position="241"/>
    </location>
</feature>
<feature type="active site" description="Proton acceptor" evidence="1">
    <location>
        <position position="11"/>
    </location>
</feature>
<feature type="active site" description="Proton donor" evidence="1">
    <location>
        <position position="130"/>
    </location>
</feature>
<protein>
    <recommendedName>
        <fullName evidence="1">1-(5-phosphoribosyl)-5-[(5-phosphoribosylamino)methylideneamino] imidazole-4-carboxamide isomerase</fullName>
        <ecNumber evidence="1">5.3.1.16</ecNumber>
    </recommendedName>
    <alternativeName>
        <fullName evidence="1">Phosphoribosylformimino-5-aminoimidazole carboxamide ribotide isomerase</fullName>
    </alternativeName>
</protein>
<accession>A0LTS5</accession>
<evidence type="ECO:0000255" key="1">
    <source>
        <dbReference type="HAMAP-Rule" id="MF_01014"/>
    </source>
</evidence>
<reference key="1">
    <citation type="journal article" date="2009" name="Genome Res.">
        <title>Complete genome of the cellulolytic thermophile Acidothermus cellulolyticus 11B provides insights into its ecophysiological and evolutionary adaptations.</title>
        <authorList>
            <person name="Barabote R.D."/>
            <person name="Xie G."/>
            <person name="Leu D.H."/>
            <person name="Normand P."/>
            <person name="Necsulea A."/>
            <person name="Daubin V."/>
            <person name="Medigue C."/>
            <person name="Adney W.S."/>
            <person name="Xu X.C."/>
            <person name="Lapidus A."/>
            <person name="Parales R.E."/>
            <person name="Detter C."/>
            <person name="Pujic P."/>
            <person name="Bruce D."/>
            <person name="Lavire C."/>
            <person name="Challacombe J.F."/>
            <person name="Brettin T.S."/>
            <person name="Berry A.M."/>
        </authorList>
    </citation>
    <scope>NUCLEOTIDE SEQUENCE [LARGE SCALE GENOMIC DNA]</scope>
    <source>
        <strain>ATCC 43068 / DSM 8971 / 11B</strain>
    </source>
</reference>
<gene>
    <name evidence="1" type="primary">hisA</name>
    <name type="ordered locus">Acel_1062</name>
</gene>
<name>HIS4_ACIC1</name>
<keyword id="KW-0028">Amino-acid biosynthesis</keyword>
<keyword id="KW-0963">Cytoplasm</keyword>
<keyword id="KW-0368">Histidine biosynthesis</keyword>
<keyword id="KW-0413">Isomerase</keyword>
<keyword id="KW-1185">Reference proteome</keyword>